<protein>
    <recommendedName>
        <fullName evidence="1">Ethanolamine ammonia-lyase small subunit</fullName>
        <shortName evidence="1">EAL small subunit</shortName>
        <ecNumber evidence="1">4.3.1.7</ecNumber>
    </recommendedName>
</protein>
<comment type="function">
    <text evidence="1">Catalyzes the deamination of various vicinal amino-alcohols to oxo compounds. Allows this organism to utilize ethanolamine as the sole source of nitrogen and carbon in the presence of external vitamin B12.</text>
</comment>
<comment type="catalytic activity">
    <reaction evidence="1">
        <text>ethanolamine = acetaldehyde + NH4(+)</text>
        <dbReference type="Rhea" id="RHEA:15313"/>
        <dbReference type="ChEBI" id="CHEBI:15343"/>
        <dbReference type="ChEBI" id="CHEBI:28938"/>
        <dbReference type="ChEBI" id="CHEBI:57603"/>
        <dbReference type="EC" id="4.3.1.7"/>
    </reaction>
</comment>
<comment type="cofactor">
    <cofactor evidence="1">
        <name>adenosylcob(III)alamin</name>
        <dbReference type="ChEBI" id="CHEBI:18408"/>
    </cofactor>
    <text evidence="1">Binds between the large and small subunits.</text>
</comment>
<comment type="pathway">
    <text evidence="1">Amine and polyamine degradation; ethanolamine degradation.</text>
</comment>
<comment type="subunit">
    <text evidence="1">The basic unit is a heterodimer which dimerizes to form tetramers. The heterotetramers trimerize; 6 large subunits form a core ring with 6 small subunits projecting outwards.</text>
</comment>
<comment type="subcellular location">
    <subcellularLocation>
        <location evidence="1">Bacterial microcompartment</location>
    </subcellularLocation>
</comment>
<comment type="similarity">
    <text evidence="1">Belongs to the EutC family.</text>
</comment>
<reference key="1">
    <citation type="journal article" date="2009" name="PLoS Genet.">
        <title>Organised genome dynamics in the Escherichia coli species results in highly diverse adaptive paths.</title>
        <authorList>
            <person name="Touchon M."/>
            <person name="Hoede C."/>
            <person name="Tenaillon O."/>
            <person name="Barbe V."/>
            <person name="Baeriswyl S."/>
            <person name="Bidet P."/>
            <person name="Bingen E."/>
            <person name="Bonacorsi S."/>
            <person name="Bouchier C."/>
            <person name="Bouvet O."/>
            <person name="Calteau A."/>
            <person name="Chiapello H."/>
            <person name="Clermont O."/>
            <person name="Cruveiller S."/>
            <person name="Danchin A."/>
            <person name="Diard M."/>
            <person name="Dossat C."/>
            <person name="Karoui M.E."/>
            <person name="Frapy E."/>
            <person name="Garry L."/>
            <person name="Ghigo J.M."/>
            <person name="Gilles A.M."/>
            <person name="Johnson J."/>
            <person name="Le Bouguenec C."/>
            <person name="Lescat M."/>
            <person name="Mangenot S."/>
            <person name="Martinez-Jehanne V."/>
            <person name="Matic I."/>
            <person name="Nassif X."/>
            <person name="Oztas S."/>
            <person name="Petit M.A."/>
            <person name="Pichon C."/>
            <person name="Rouy Z."/>
            <person name="Ruf C.S."/>
            <person name="Schneider D."/>
            <person name="Tourret J."/>
            <person name="Vacherie B."/>
            <person name="Vallenet D."/>
            <person name="Medigue C."/>
            <person name="Rocha E.P.C."/>
            <person name="Denamur E."/>
        </authorList>
    </citation>
    <scope>NUCLEOTIDE SEQUENCE [LARGE SCALE GENOMIC DNA]</scope>
    <source>
        <strain>S88 / ExPEC</strain>
    </source>
</reference>
<keyword id="KW-1283">Bacterial microcompartment</keyword>
<keyword id="KW-0846">Cobalamin</keyword>
<keyword id="KW-0170">Cobalt</keyword>
<keyword id="KW-0456">Lyase</keyword>
<keyword id="KW-1185">Reference proteome</keyword>
<name>EUTC_ECO45</name>
<gene>
    <name evidence="1" type="primary">eutC</name>
    <name type="ordered locus">ECS88_2628</name>
</gene>
<dbReference type="EC" id="4.3.1.7" evidence="1"/>
<dbReference type="EMBL" id="CU928161">
    <property type="protein sequence ID" value="CAR03899.1"/>
    <property type="molecule type" value="Genomic_DNA"/>
</dbReference>
<dbReference type="RefSeq" id="WP_000372316.1">
    <property type="nucleotide sequence ID" value="NC_011742.1"/>
</dbReference>
<dbReference type="SMR" id="B7MHU1"/>
<dbReference type="KEGG" id="ecz:ECS88_2628"/>
<dbReference type="HOGENOM" id="CLU_068224_0_0_6"/>
<dbReference type="UniPathway" id="UPA00560"/>
<dbReference type="Proteomes" id="UP000000747">
    <property type="component" value="Chromosome"/>
</dbReference>
<dbReference type="GO" id="GO:0009350">
    <property type="term" value="C:ethanolamine ammonia-lyase complex"/>
    <property type="evidence" value="ECO:0007669"/>
    <property type="project" value="UniProtKB-UniRule"/>
</dbReference>
<dbReference type="GO" id="GO:0031471">
    <property type="term" value="C:ethanolamine degradation polyhedral organelle"/>
    <property type="evidence" value="ECO:0007669"/>
    <property type="project" value="UniProtKB-UniRule"/>
</dbReference>
<dbReference type="GO" id="GO:0031419">
    <property type="term" value="F:cobalamin binding"/>
    <property type="evidence" value="ECO:0007669"/>
    <property type="project" value="UniProtKB-UniRule"/>
</dbReference>
<dbReference type="GO" id="GO:0008851">
    <property type="term" value="F:ethanolamine ammonia-lyase activity"/>
    <property type="evidence" value="ECO:0007669"/>
    <property type="project" value="UniProtKB-UniRule"/>
</dbReference>
<dbReference type="GO" id="GO:0006520">
    <property type="term" value="P:amino acid metabolic process"/>
    <property type="evidence" value="ECO:0007669"/>
    <property type="project" value="InterPro"/>
</dbReference>
<dbReference type="GO" id="GO:0046336">
    <property type="term" value="P:ethanolamine catabolic process"/>
    <property type="evidence" value="ECO:0007669"/>
    <property type="project" value="UniProtKB-UniRule"/>
</dbReference>
<dbReference type="FunFam" id="3.40.50.11240:FF:000001">
    <property type="entry name" value="Ethanolamine ammonia-lyase light chain"/>
    <property type="match status" value="1"/>
</dbReference>
<dbReference type="Gene3D" id="6.10.140.690">
    <property type="match status" value="1"/>
</dbReference>
<dbReference type="Gene3D" id="6.10.250.2060">
    <property type="match status" value="1"/>
</dbReference>
<dbReference type="Gene3D" id="3.40.50.11240">
    <property type="entry name" value="Ethanolamine ammonia-lyase light chain (EutC)"/>
    <property type="match status" value="1"/>
</dbReference>
<dbReference type="HAMAP" id="MF_00601">
    <property type="entry name" value="EutC"/>
    <property type="match status" value="1"/>
</dbReference>
<dbReference type="InterPro" id="IPR009246">
    <property type="entry name" value="EutC"/>
</dbReference>
<dbReference type="InterPro" id="IPR042251">
    <property type="entry name" value="EutC_C"/>
</dbReference>
<dbReference type="NCBIfam" id="NF003971">
    <property type="entry name" value="PRK05465.1"/>
    <property type="match status" value="1"/>
</dbReference>
<dbReference type="PANTHER" id="PTHR39330">
    <property type="entry name" value="ETHANOLAMINE AMMONIA-LYASE LIGHT CHAIN"/>
    <property type="match status" value="1"/>
</dbReference>
<dbReference type="PANTHER" id="PTHR39330:SF1">
    <property type="entry name" value="ETHANOLAMINE AMMONIA-LYASE SMALL SUBUNIT"/>
    <property type="match status" value="1"/>
</dbReference>
<dbReference type="Pfam" id="PF05985">
    <property type="entry name" value="EutC"/>
    <property type="match status" value="1"/>
</dbReference>
<dbReference type="PIRSF" id="PIRSF018982">
    <property type="entry name" value="EutC"/>
    <property type="match status" value="1"/>
</dbReference>
<feature type="chain" id="PRO_1000130085" description="Ethanolamine ammonia-lyase small subunit">
    <location>
        <begin position="1"/>
        <end position="295"/>
    </location>
</feature>
<feature type="binding site" evidence="1">
    <location>
        <position position="207"/>
    </location>
    <ligand>
        <name>adenosylcob(III)alamin</name>
        <dbReference type="ChEBI" id="CHEBI:18408"/>
    </ligand>
</feature>
<feature type="binding site" evidence="1">
    <location>
        <position position="228"/>
    </location>
    <ligand>
        <name>adenosylcob(III)alamin</name>
        <dbReference type="ChEBI" id="CHEBI:18408"/>
    </ligand>
</feature>
<feature type="binding site" evidence="1">
    <location>
        <position position="258"/>
    </location>
    <ligand>
        <name>adenosylcob(III)alamin</name>
        <dbReference type="ChEBI" id="CHEBI:18408"/>
    </ligand>
</feature>
<sequence length="295" mass="31782">MDQKQIEEIVRSVMASMGQAAPAPSEAKCATTNCAAPVTSESCALDLGSAEAKAWIGVENPHRADVLTELRRSTVARVCTGRAGPRPRTQALLRFLADHSRSKDTVLKEVPEEWVKAQGLLEVRSEISDKNLYLTRPDMGRRLCAEAVEALKAQCVANPDVQVVISDGLSTDAITVNYEEILPPLMAGLKQAGLKVGTPFFVRYGRVKIEDQIGEILGAKVVILLVGERPGLGQSESLSCYAVYSPRMATTVEADRTCISNIHQGGTPPVEAAAVIVDLAKRMLEQKASGINMTR</sequence>
<proteinExistence type="inferred from homology"/>
<organism>
    <name type="scientific">Escherichia coli O45:K1 (strain S88 / ExPEC)</name>
    <dbReference type="NCBI Taxonomy" id="585035"/>
    <lineage>
        <taxon>Bacteria</taxon>
        <taxon>Pseudomonadati</taxon>
        <taxon>Pseudomonadota</taxon>
        <taxon>Gammaproteobacteria</taxon>
        <taxon>Enterobacterales</taxon>
        <taxon>Enterobacteriaceae</taxon>
        <taxon>Escherichia</taxon>
    </lineage>
</organism>
<evidence type="ECO:0000255" key="1">
    <source>
        <dbReference type="HAMAP-Rule" id="MF_00601"/>
    </source>
</evidence>
<accession>B7MHU1</accession>